<keyword id="KW-0223">Dioxygenase</keyword>
<keyword id="KW-0349">Heme</keyword>
<keyword id="KW-0408">Iron</keyword>
<keyword id="KW-0479">Metal-binding</keyword>
<keyword id="KW-0560">Oxidoreductase</keyword>
<keyword id="KW-1185">Reference proteome</keyword>
<keyword id="KW-0823">Tryptophan catabolism</keyword>
<accession>Q2N5X1</accession>
<sequence length="263" mass="30341">MAQDVTYSSYLDLDRILAAQHPVSGAHDEMLFIIVHQASELWLKLCLHELFAARDCIAADNLRPSFKMLSRVARAQTQLIQSWDVLSTMTPHDYSQIRPHLGRSSGFQSPQYRMMEFLLGGRNPDMVAMHEPTPEIATALREELARTSLYDEAIRLLSRRGFAIPDEVLARKLDEVWVRSEEVEAAWAEIYRDPQQHWDLYELAEKLVDLEYHFQRWRFGHLKTVERIIGFKRGTGGTKGVPYLEGVLKQAFFPELLSVRTAI</sequence>
<feature type="chain" id="PRO_0000360114" description="Tryptophan 2,3-dioxygenase">
    <location>
        <begin position="1"/>
        <end position="263"/>
    </location>
</feature>
<feature type="binding site" evidence="1">
    <location>
        <begin position="32"/>
        <end position="36"/>
    </location>
    <ligand>
        <name>substrate</name>
    </ligand>
</feature>
<feature type="binding site" evidence="1">
    <location>
        <position position="94"/>
    </location>
    <ligand>
        <name>substrate</name>
    </ligand>
</feature>
<feature type="binding site" evidence="1">
    <location>
        <position position="98"/>
    </location>
    <ligand>
        <name>substrate</name>
    </ligand>
</feature>
<feature type="binding site" description="axial binding residue" evidence="1">
    <location>
        <position position="221"/>
    </location>
    <ligand>
        <name>heme</name>
        <dbReference type="ChEBI" id="CHEBI:30413"/>
    </ligand>
    <ligandPart>
        <name>Fe</name>
        <dbReference type="ChEBI" id="CHEBI:18248"/>
    </ligandPart>
</feature>
<feature type="binding site" evidence="1">
    <location>
        <position position="235"/>
    </location>
    <ligand>
        <name>substrate</name>
    </ligand>
</feature>
<proteinExistence type="inferred from homology"/>
<protein>
    <recommendedName>
        <fullName evidence="1">Tryptophan 2,3-dioxygenase</fullName>
        <shortName evidence="1">TDO</shortName>
        <ecNumber evidence="1">1.13.11.11</ecNumber>
    </recommendedName>
    <alternativeName>
        <fullName evidence="1">Tryptamin 2,3-dioxygenase</fullName>
    </alternativeName>
    <alternativeName>
        <fullName evidence="1">Tryptophan oxygenase</fullName>
        <shortName evidence="1">TO</shortName>
        <shortName evidence="1">TRPO</shortName>
    </alternativeName>
    <alternativeName>
        <fullName evidence="1">Tryptophan pyrrolase</fullName>
    </alternativeName>
    <alternativeName>
        <fullName evidence="1">Tryptophanase</fullName>
    </alternativeName>
</protein>
<name>T23O_ERYLH</name>
<reference key="1">
    <citation type="journal article" date="2009" name="J. Bacteriol.">
        <title>Complete genome sequence of Erythrobacter litoralis HTCC2594.</title>
        <authorList>
            <person name="Oh H.M."/>
            <person name="Giovannoni S.J."/>
            <person name="Ferriera S."/>
            <person name="Johnson J."/>
            <person name="Cho J.C."/>
        </authorList>
    </citation>
    <scope>NUCLEOTIDE SEQUENCE [LARGE SCALE GENOMIC DNA]</scope>
    <source>
        <strain>HTCC2594</strain>
    </source>
</reference>
<evidence type="ECO:0000255" key="1">
    <source>
        <dbReference type="HAMAP-Rule" id="MF_01972"/>
    </source>
</evidence>
<organism>
    <name type="scientific">Erythrobacter litoralis (strain HTCC2594)</name>
    <dbReference type="NCBI Taxonomy" id="314225"/>
    <lineage>
        <taxon>Bacteria</taxon>
        <taxon>Pseudomonadati</taxon>
        <taxon>Pseudomonadota</taxon>
        <taxon>Alphaproteobacteria</taxon>
        <taxon>Sphingomonadales</taxon>
        <taxon>Erythrobacteraceae</taxon>
        <taxon>Erythrobacter/Porphyrobacter group</taxon>
        <taxon>Erythrobacter</taxon>
    </lineage>
</organism>
<gene>
    <name evidence="1" type="primary">kynA</name>
    <name type="ordered locus">ELI_14140</name>
</gene>
<comment type="function">
    <text evidence="1">Heme-dependent dioxygenase that catalyzes the oxidative cleavage of the L-tryptophan (L-Trp) pyrrole ring and converts L-tryptophan to N-formyl-L-kynurenine. Catalyzes the oxidative cleavage of the indole moiety.</text>
</comment>
<comment type="catalytic activity">
    <reaction evidence="1">
        <text>L-tryptophan + O2 = N-formyl-L-kynurenine</text>
        <dbReference type="Rhea" id="RHEA:24536"/>
        <dbReference type="ChEBI" id="CHEBI:15379"/>
        <dbReference type="ChEBI" id="CHEBI:57912"/>
        <dbReference type="ChEBI" id="CHEBI:58629"/>
        <dbReference type="EC" id="1.13.11.11"/>
    </reaction>
</comment>
<comment type="cofactor">
    <cofactor evidence="1">
        <name>heme</name>
        <dbReference type="ChEBI" id="CHEBI:30413"/>
    </cofactor>
    <text evidence="1">Binds 1 heme group per subunit.</text>
</comment>
<comment type="pathway">
    <text evidence="1">Amino-acid degradation; L-tryptophan degradation via kynurenine pathway; L-kynurenine from L-tryptophan: step 1/2.</text>
</comment>
<comment type="subunit">
    <text evidence="1">Homotetramer.</text>
</comment>
<comment type="similarity">
    <text evidence="1">Belongs to the tryptophan 2,3-dioxygenase family.</text>
</comment>
<dbReference type="EC" id="1.13.11.11" evidence="1"/>
<dbReference type="EMBL" id="CP000157">
    <property type="protein sequence ID" value="ABC64920.1"/>
    <property type="molecule type" value="Genomic_DNA"/>
</dbReference>
<dbReference type="RefSeq" id="WP_011415742.1">
    <property type="nucleotide sequence ID" value="NC_007722.1"/>
</dbReference>
<dbReference type="SMR" id="Q2N5X1"/>
<dbReference type="STRING" id="314225.ELI_14140"/>
<dbReference type="KEGG" id="eli:ELI_14140"/>
<dbReference type="eggNOG" id="COG3483">
    <property type="taxonomic scope" value="Bacteria"/>
</dbReference>
<dbReference type="HOGENOM" id="CLU_063240_0_0_5"/>
<dbReference type="OrthoDB" id="9776847at2"/>
<dbReference type="UniPathway" id="UPA00333">
    <property type="reaction ID" value="UER00453"/>
</dbReference>
<dbReference type="Proteomes" id="UP000008808">
    <property type="component" value="Chromosome"/>
</dbReference>
<dbReference type="GO" id="GO:0020037">
    <property type="term" value="F:heme binding"/>
    <property type="evidence" value="ECO:0000250"/>
    <property type="project" value="UniProtKB"/>
</dbReference>
<dbReference type="GO" id="GO:0046872">
    <property type="term" value="F:metal ion binding"/>
    <property type="evidence" value="ECO:0007669"/>
    <property type="project" value="UniProtKB-KW"/>
</dbReference>
<dbReference type="GO" id="GO:0004833">
    <property type="term" value="F:tryptophan 2,3-dioxygenase activity"/>
    <property type="evidence" value="ECO:0000250"/>
    <property type="project" value="UniProtKB"/>
</dbReference>
<dbReference type="GO" id="GO:0019442">
    <property type="term" value="P:L-tryptophan catabolic process to acetyl-CoA"/>
    <property type="evidence" value="ECO:0007669"/>
    <property type="project" value="TreeGrafter"/>
</dbReference>
<dbReference type="GO" id="GO:0019441">
    <property type="term" value="P:L-tryptophan catabolic process to kynurenine"/>
    <property type="evidence" value="ECO:0000250"/>
    <property type="project" value="UniProtKB"/>
</dbReference>
<dbReference type="FunFam" id="1.20.58.480:FF:000001">
    <property type="entry name" value="Tryptophan 2,3-dioxygenase"/>
    <property type="match status" value="1"/>
</dbReference>
<dbReference type="Gene3D" id="1.20.58.480">
    <property type="match status" value="1"/>
</dbReference>
<dbReference type="HAMAP" id="MF_01972">
    <property type="entry name" value="T23O"/>
    <property type="match status" value="1"/>
</dbReference>
<dbReference type="InterPro" id="IPR037217">
    <property type="entry name" value="Trp/Indoleamine_2_3_dOase-like"/>
</dbReference>
<dbReference type="InterPro" id="IPR004981">
    <property type="entry name" value="Trp_2_3_dOase"/>
</dbReference>
<dbReference type="PANTHER" id="PTHR10138">
    <property type="entry name" value="TRYPTOPHAN 2,3-DIOXYGENASE"/>
    <property type="match status" value="1"/>
</dbReference>
<dbReference type="PANTHER" id="PTHR10138:SF0">
    <property type="entry name" value="TRYPTOPHAN 2,3-DIOXYGENASE"/>
    <property type="match status" value="1"/>
</dbReference>
<dbReference type="Pfam" id="PF03301">
    <property type="entry name" value="Trp_dioxygenase"/>
    <property type="match status" value="2"/>
</dbReference>
<dbReference type="SUPFAM" id="SSF140959">
    <property type="entry name" value="Indolic compounds 2,3-dioxygenase-like"/>
    <property type="match status" value="1"/>
</dbReference>